<feature type="signal peptide">
    <location>
        <begin position="1"/>
        <end position="17"/>
    </location>
</feature>
<feature type="chain" id="PRO_0000041476" description="Protein wingless">
    <location>
        <begin position="18"/>
        <end position="468"/>
    </location>
</feature>
<feature type="region of interest" description="Binds porcupine">
    <location>
        <begin position="83"/>
        <end position="106"/>
    </location>
</feature>
<feature type="region of interest" description="Disordered" evidence="4">
    <location>
        <begin position="333"/>
        <end position="362"/>
    </location>
</feature>
<feature type="lipid moiety-binding region" description="O-palmitoleoyl serine; by PORCN" evidence="2">
    <location>
        <position position="239"/>
    </location>
</feature>
<feature type="glycosylation site" description="N-linked (GlcNAc...) asparagine" evidence="6">
    <location>
        <position position="103"/>
    </location>
</feature>
<feature type="glycosylation site" description="N-linked (GlcNAc...) asparagine" evidence="3">
    <location>
        <position position="108"/>
    </location>
</feature>
<feature type="glycosylation site" description="N-linked (GlcNAc...) asparagine" evidence="6">
    <location>
        <position position="414"/>
    </location>
</feature>
<feature type="disulfide bond" evidence="1">
    <location>
        <begin position="93"/>
        <end position="104"/>
    </location>
</feature>
<feature type="disulfide bond" evidence="1">
    <location>
        <begin position="146"/>
        <end position="154"/>
    </location>
</feature>
<feature type="disulfide bond" evidence="1">
    <location>
        <begin position="156"/>
        <end position="185"/>
    </location>
</feature>
<feature type="disulfide bond" evidence="1">
    <location>
        <begin position="233"/>
        <end position="247"/>
    </location>
</feature>
<feature type="disulfide bond" evidence="1">
    <location>
        <begin position="235"/>
        <end position="242"/>
    </location>
</feature>
<feature type="disulfide bond" evidence="1">
    <location>
        <begin position="397"/>
        <end position="428"/>
    </location>
</feature>
<feature type="disulfide bond" evidence="1">
    <location>
        <begin position="413"/>
        <end position="423"/>
    </location>
</feature>
<feature type="disulfide bond" evidence="1">
    <location>
        <begin position="427"/>
        <end position="467"/>
    </location>
</feature>
<feature type="disulfide bond" evidence="1">
    <location>
        <begin position="443"/>
        <end position="458"/>
    </location>
</feature>
<feature type="disulfide bond" evidence="1">
    <location>
        <begin position="445"/>
        <end position="455"/>
    </location>
</feature>
<feature type="disulfide bond" evidence="1">
    <location>
        <begin position="450"/>
        <end position="451"/>
    </location>
</feature>
<feature type="splice variant" id="VSP_016535" description="In isoform B." evidence="19">
    <location>
        <begin position="1"/>
        <end position="53"/>
    </location>
</feature>
<feature type="mutagenesis site" description="No effect on glycosylation." evidence="6">
    <original>T</original>
    <variation>A</variation>
    <location>
        <position position="51"/>
    </location>
</feature>
<feature type="mutagenesis site" description="In allele wg-S21; results in lethality." evidence="17">
    <original>C</original>
    <variation>Y</variation>
    <location>
        <position position="93"/>
    </location>
</feature>
<feature type="mutagenesis site" description="In allele wg-IL114; temperature sensitive lethal." evidence="17 18">
    <original>C</original>
    <variation>S</variation>
    <location>
        <position position="104"/>
    </location>
</feature>
<feature type="mutagenesis site" description="Glycosylation disrupted." evidence="6">
    <original>S</original>
    <variation>A</variation>
    <location>
        <position position="105"/>
    </location>
</feature>
<feature type="mutagenesis site" description="No effect on glycosylation." evidence="6">
    <original>S</original>
    <variation>A</variation>
    <location>
        <position position="110"/>
    </location>
</feature>
<feature type="mutagenesis site" description="In allele wg-IN67; embryonic lethal." evidence="18">
    <original>G</original>
    <variation>D</variation>
    <location>
        <position position="221"/>
    </location>
</feature>
<feature type="mutagenesis site" description="Glycosylation disrupted." evidence="6">
    <original>T</original>
    <variation>A</variation>
    <location>
        <position position="416"/>
    </location>
</feature>
<feature type="sequence conflict" description="In Ref. 6; AAM75051." evidence="19" ref="6">
    <original>E</original>
    <variation>K</variation>
    <location>
        <position position="92"/>
    </location>
</feature>
<feature type="sequence conflict" description="In Ref. 2; AAA28646." evidence="19" ref="2">
    <original>W</original>
    <variation>C</variation>
    <location>
        <position position="182"/>
    </location>
</feature>
<feature type="sequence conflict" description="In Ref. 2; AAA28646." evidence="19" ref="2">
    <original>E</original>
    <variation>D</variation>
    <location>
        <position position="204"/>
    </location>
</feature>
<feature type="sequence conflict" description="In Ref. 2; AAA28646." evidence="19" ref="2">
    <original>N</original>
    <variation>T</variation>
    <location>
        <position position="275"/>
    </location>
</feature>
<feature type="sequence conflict" description="In Ref. 2; AAA28646." evidence="19" ref="2">
    <original>G</original>
    <variation>A</variation>
    <location>
        <position position="297"/>
    </location>
</feature>
<feature type="sequence conflict" description="In Ref. 2; AAA28646." evidence="19" ref="2">
    <original>E</original>
    <variation>EE</variation>
    <location>
        <position position="315"/>
    </location>
</feature>
<feature type="sequence conflict" description="In Ref. 2; AAA28646." evidence="19" ref="2">
    <original>K</original>
    <variation>N</variation>
    <location>
        <position position="364"/>
    </location>
</feature>
<feature type="sequence conflict" description="In Ref. 2; AAA28646." evidence="19" ref="2">
    <original>E</original>
    <variation>D</variation>
    <location>
        <position position="391"/>
    </location>
</feature>
<feature type="sequence conflict" description="In Ref. 2; AAA28646." evidence="19" ref="2">
    <original>E</original>
    <variation>D</variation>
    <location>
        <position position="441"/>
    </location>
</feature>
<accession>P09615</accession>
<accession>Q27768</accession>
<accession>Q27769</accession>
<accession>Q8IPI1</accession>
<accession>Q8MQP9</accession>
<accession>Q9VM27</accession>
<sequence>MDISYIFVICLMALCSGGSSLSQVEGKQKSGRGRGSMWWGIAKVGEPNNITPIMYMDPAIHSTLRRKQRRLVRDNPGVLGALVKGANLAISECQHQFRNRRWNCSTRNFSRGKNLFGKIVDRGCRETSFIYAITSAAVTHSIARACSEGTIESCTCDYSHQSRSPQANHQAGSVAGVRDWEWGGCSDNIGFGFKFSREFVDTGERGRNLREKMNLHNNEAGRAHVQAEMRQECKCHGMSGSCTVKTCWMRLANFRVIGDNLKARFDGATRVQVTNSLRATNALAPVSPNAAGSNSVGSNGLIIPQSGLVYGEEEERMLNDHMPDILLENSHPISKIHHPNMPSPNSLPQAGQRGGRNGRRQGRKHNRYHFQLNPHNPEHKPPGSKDLVYLEPSPSFCEKNLRQGILGTHGRQCNETSLGVDGCGLMCCGRGYRRDEVVVVERCACTFHWCCEVKCKLCRTKKVIYTCL</sequence>
<reference key="1">
    <citation type="journal article" date="1987" name="Cell">
        <title>The Drosophila homolog of the mouse mammary oncogene int-1 is identical to the segment polarity gene wingless.</title>
        <authorList>
            <person name="Rijsewijk F."/>
            <person name="Schuermann M."/>
            <person name="Wagenaar E."/>
            <person name="Parren P."/>
            <person name="Weigel D."/>
            <person name="Nusse R."/>
        </authorList>
    </citation>
    <scope>NUCLEOTIDE SEQUENCE [MRNA] (ISOFORM A)</scope>
    <scope>TISSUE SPECIFICITY</scope>
    <scope>DEVELOPMENTAL STAGE</scope>
</reference>
<reference key="2">
    <citation type="journal article" date="1988" name="Proc. Natl. Acad. Sci. U.S.A.">
        <title>Drosophila homolog of the murine Int-1 protooncogene.</title>
        <authorList>
            <person name="Uzvoelgyi E."/>
            <person name="Kiss I."/>
            <person name="Pitt A."/>
            <person name="Arsenian S."/>
            <person name="Ingvarsson S."/>
            <person name="Udvardy A."/>
            <person name="Hamada M."/>
            <person name="Klein G."/>
            <person name="Suemegi J."/>
        </authorList>
    </citation>
    <scope>NUCLEOTIDE SEQUENCE [MRNA] (ISOFORM A)</scope>
    <scope>DEVELOPMENTAL STAGE</scope>
</reference>
<reference key="3">
    <citation type="journal article" date="1993" name="EMBO J.">
        <title>Mutations in the segment polarity genes wingless and porcupine impair secretion of the wingless protein.</title>
        <authorList>
            <person name="van den Heuvel M."/>
            <person name="Harryman-Samos C."/>
            <person name="Klingensmith J."/>
            <person name="Perrimon N."/>
            <person name="Nusse R."/>
        </authorList>
    </citation>
    <scope>NUCLEOTIDE SEQUENCE [MRNA] (ISOFORM A)</scope>
    <scope>SUBCELLULAR LOCATION</scope>
    <scope>MUTAGENESIS OF CYS-104 AND GLY-221</scope>
</reference>
<reference key="4">
    <citation type="journal article" date="2000" name="Science">
        <title>The genome sequence of Drosophila melanogaster.</title>
        <authorList>
            <person name="Adams M.D."/>
            <person name="Celniker S.E."/>
            <person name="Holt R.A."/>
            <person name="Evans C.A."/>
            <person name="Gocayne J.D."/>
            <person name="Amanatides P.G."/>
            <person name="Scherer S.E."/>
            <person name="Li P.W."/>
            <person name="Hoskins R.A."/>
            <person name="Galle R.F."/>
            <person name="George R.A."/>
            <person name="Lewis S.E."/>
            <person name="Richards S."/>
            <person name="Ashburner M."/>
            <person name="Henderson S.N."/>
            <person name="Sutton G.G."/>
            <person name="Wortman J.R."/>
            <person name="Yandell M.D."/>
            <person name="Zhang Q."/>
            <person name="Chen L.X."/>
            <person name="Brandon R.C."/>
            <person name="Rogers Y.-H.C."/>
            <person name="Blazej R.G."/>
            <person name="Champe M."/>
            <person name="Pfeiffer B.D."/>
            <person name="Wan K.H."/>
            <person name="Doyle C."/>
            <person name="Baxter E.G."/>
            <person name="Helt G."/>
            <person name="Nelson C.R."/>
            <person name="Miklos G.L.G."/>
            <person name="Abril J.F."/>
            <person name="Agbayani A."/>
            <person name="An H.-J."/>
            <person name="Andrews-Pfannkoch C."/>
            <person name="Baldwin D."/>
            <person name="Ballew R.M."/>
            <person name="Basu A."/>
            <person name="Baxendale J."/>
            <person name="Bayraktaroglu L."/>
            <person name="Beasley E.M."/>
            <person name="Beeson K.Y."/>
            <person name="Benos P.V."/>
            <person name="Berman B.P."/>
            <person name="Bhandari D."/>
            <person name="Bolshakov S."/>
            <person name="Borkova D."/>
            <person name="Botchan M.R."/>
            <person name="Bouck J."/>
            <person name="Brokstein P."/>
            <person name="Brottier P."/>
            <person name="Burtis K.C."/>
            <person name="Busam D.A."/>
            <person name="Butler H."/>
            <person name="Cadieu E."/>
            <person name="Center A."/>
            <person name="Chandra I."/>
            <person name="Cherry J.M."/>
            <person name="Cawley S."/>
            <person name="Dahlke C."/>
            <person name="Davenport L.B."/>
            <person name="Davies P."/>
            <person name="de Pablos B."/>
            <person name="Delcher A."/>
            <person name="Deng Z."/>
            <person name="Mays A.D."/>
            <person name="Dew I."/>
            <person name="Dietz S.M."/>
            <person name="Dodson K."/>
            <person name="Doup L.E."/>
            <person name="Downes M."/>
            <person name="Dugan-Rocha S."/>
            <person name="Dunkov B.C."/>
            <person name="Dunn P."/>
            <person name="Durbin K.J."/>
            <person name="Evangelista C.C."/>
            <person name="Ferraz C."/>
            <person name="Ferriera S."/>
            <person name="Fleischmann W."/>
            <person name="Fosler C."/>
            <person name="Gabrielian A.E."/>
            <person name="Garg N.S."/>
            <person name="Gelbart W.M."/>
            <person name="Glasser K."/>
            <person name="Glodek A."/>
            <person name="Gong F."/>
            <person name="Gorrell J.H."/>
            <person name="Gu Z."/>
            <person name="Guan P."/>
            <person name="Harris M."/>
            <person name="Harris N.L."/>
            <person name="Harvey D.A."/>
            <person name="Heiman T.J."/>
            <person name="Hernandez J.R."/>
            <person name="Houck J."/>
            <person name="Hostin D."/>
            <person name="Houston K.A."/>
            <person name="Howland T.J."/>
            <person name="Wei M.-H."/>
            <person name="Ibegwam C."/>
            <person name="Jalali M."/>
            <person name="Kalush F."/>
            <person name="Karpen G.H."/>
            <person name="Ke Z."/>
            <person name="Kennison J.A."/>
            <person name="Ketchum K.A."/>
            <person name="Kimmel B.E."/>
            <person name="Kodira C.D."/>
            <person name="Kraft C.L."/>
            <person name="Kravitz S."/>
            <person name="Kulp D."/>
            <person name="Lai Z."/>
            <person name="Lasko P."/>
            <person name="Lei Y."/>
            <person name="Levitsky A.A."/>
            <person name="Li J.H."/>
            <person name="Li Z."/>
            <person name="Liang Y."/>
            <person name="Lin X."/>
            <person name="Liu X."/>
            <person name="Mattei B."/>
            <person name="McIntosh T.C."/>
            <person name="McLeod M.P."/>
            <person name="McPherson D."/>
            <person name="Merkulov G."/>
            <person name="Milshina N.V."/>
            <person name="Mobarry C."/>
            <person name="Morris J."/>
            <person name="Moshrefi A."/>
            <person name="Mount S.M."/>
            <person name="Moy M."/>
            <person name="Murphy B."/>
            <person name="Murphy L."/>
            <person name="Muzny D.M."/>
            <person name="Nelson D.L."/>
            <person name="Nelson D.R."/>
            <person name="Nelson K.A."/>
            <person name="Nixon K."/>
            <person name="Nusskern D.R."/>
            <person name="Pacleb J.M."/>
            <person name="Palazzolo M."/>
            <person name="Pittman G.S."/>
            <person name="Pan S."/>
            <person name="Pollard J."/>
            <person name="Puri V."/>
            <person name="Reese M.G."/>
            <person name="Reinert K."/>
            <person name="Remington K."/>
            <person name="Saunders R.D.C."/>
            <person name="Scheeler F."/>
            <person name="Shen H."/>
            <person name="Shue B.C."/>
            <person name="Siden-Kiamos I."/>
            <person name="Simpson M."/>
            <person name="Skupski M.P."/>
            <person name="Smith T.J."/>
            <person name="Spier E."/>
            <person name="Spradling A.C."/>
            <person name="Stapleton M."/>
            <person name="Strong R."/>
            <person name="Sun E."/>
            <person name="Svirskas R."/>
            <person name="Tector C."/>
            <person name="Turner R."/>
            <person name="Venter E."/>
            <person name="Wang A.H."/>
            <person name="Wang X."/>
            <person name="Wang Z.-Y."/>
            <person name="Wassarman D.A."/>
            <person name="Weinstock G.M."/>
            <person name="Weissenbach J."/>
            <person name="Williams S.M."/>
            <person name="Woodage T."/>
            <person name="Worley K.C."/>
            <person name="Wu D."/>
            <person name="Yang S."/>
            <person name="Yao Q.A."/>
            <person name="Ye J."/>
            <person name="Yeh R.-F."/>
            <person name="Zaveri J.S."/>
            <person name="Zhan M."/>
            <person name="Zhang G."/>
            <person name="Zhao Q."/>
            <person name="Zheng L."/>
            <person name="Zheng X.H."/>
            <person name="Zhong F.N."/>
            <person name="Zhong W."/>
            <person name="Zhou X."/>
            <person name="Zhu S.C."/>
            <person name="Zhu X."/>
            <person name="Smith H.O."/>
            <person name="Gibbs R.A."/>
            <person name="Myers E.W."/>
            <person name="Rubin G.M."/>
            <person name="Venter J.C."/>
        </authorList>
    </citation>
    <scope>NUCLEOTIDE SEQUENCE [LARGE SCALE GENOMIC DNA]</scope>
    <source>
        <strain>Berkeley</strain>
    </source>
</reference>
<reference key="5">
    <citation type="journal article" date="2002" name="Genome Biol.">
        <title>Annotation of the Drosophila melanogaster euchromatic genome: a systematic review.</title>
        <authorList>
            <person name="Misra S."/>
            <person name="Crosby M.A."/>
            <person name="Mungall C.J."/>
            <person name="Matthews B.B."/>
            <person name="Campbell K.S."/>
            <person name="Hradecky P."/>
            <person name="Huang Y."/>
            <person name="Kaminker J.S."/>
            <person name="Millburn G.H."/>
            <person name="Prochnik S.E."/>
            <person name="Smith C.D."/>
            <person name="Tupy J.L."/>
            <person name="Whitfield E.J."/>
            <person name="Bayraktaroglu L."/>
            <person name="Berman B.P."/>
            <person name="Bettencourt B.R."/>
            <person name="Celniker S.E."/>
            <person name="de Grey A.D.N.J."/>
            <person name="Drysdale R.A."/>
            <person name="Harris N.L."/>
            <person name="Richter J."/>
            <person name="Russo S."/>
            <person name="Schroeder A.J."/>
            <person name="Shu S.Q."/>
            <person name="Stapleton M."/>
            <person name="Yamada C."/>
            <person name="Ashburner M."/>
            <person name="Gelbart W.M."/>
            <person name="Rubin G.M."/>
            <person name="Lewis S.E."/>
        </authorList>
    </citation>
    <scope>GENOME REANNOTATION</scope>
    <scope>ALTERNATIVE SPLICING</scope>
    <source>
        <strain>Berkeley</strain>
    </source>
</reference>
<reference key="6">
    <citation type="journal article" date="2002" name="Genome Biol.">
        <title>A Drosophila full-length cDNA resource.</title>
        <authorList>
            <person name="Stapleton M."/>
            <person name="Carlson J.W."/>
            <person name="Brokstein P."/>
            <person name="Yu C."/>
            <person name="Champe M."/>
            <person name="George R.A."/>
            <person name="Guarin H."/>
            <person name="Kronmiller B."/>
            <person name="Pacleb J.M."/>
            <person name="Park S."/>
            <person name="Wan K.H."/>
            <person name="Rubin G.M."/>
            <person name="Celniker S.E."/>
        </authorList>
    </citation>
    <scope>NUCLEOTIDE SEQUENCE [LARGE SCALE MRNA] (ISOFORM A)</scope>
    <source>
        <strain>Berkeley</strain>
        <tissue>Embryo</tissue>
    </source>
</reference>
<reference key="7">
    <citation type="journal article" date="1989" name="Cell">
        <title>Distribution of the wingless gene product in Drosophila embryos: a protein involved in cell-cell communication.</title>
        <authorList>
            <person name="van den Heuvel M."/>
            <person name="Nusse R."/>
            <person name="Johnston P."/>
            <person name="Lawrence P.A."/>
        </authorList>
    </citation>
    <scope>SECRETION</scope>
</reference>
<reference key="8">
    <citation type="journal article" date="1992" name="Cell">
        <title>wingless signaling acts through zeste-white 3, the Drosophila homolog of glycogen synthase kinase-3, to regulate engrailed and establish cell fate.</title>
        <authorList>
            <person name="Siegfried E."/>
            <person name="Chou T.B."/>
            <person name="Perrimon N."/>
        </authorList>
    </citation>
    <scope>INTERACTION WITH EN</scope>
    <source>
        <tissue>Embryo</tissue>
    </source>
</reference>
<reference key="9">
    <citation type="journal article" date="1994" name="Cell">
        <title>Notch is required for wingless signaling in the epidermis of Drosophila.</title>
        <authorList>
            <person name="Couso J.P."/>
            <person name="Martinez Arias A."/>
        </authorList>
    </citation>
    <scope>MUTAGENESIS OF CYS-93 AND CYS-104</scope>
</reference>
<reference key="10">
    <citation type="journal article" date="1994" name="Dev. Biol.">
        <title>Phosphorylation of the Drosophila adherens junction protein Armadillo: roles for wingless signal and zeste-white 3 kinase.</title>
        <authorList>
            <person name="Peifer M."/>
            <person name="Pai L.-M."/>
            <person name="Casey M."/>
        </authorList>
    </citation>
    <scope>PHOSPHORYLATION OF ARM</scope>
</reference>
<reference key="11">
    <citation type="journal article" date="2001" name="Proc. Natl. Acad. Sci. U.S.A.">
        <title>Seven Wnt homologues in Drosophila: a case study of the developing tracheae.</title>
        <authorList>
            <person name="Llimargas M."/>
            <person name="Lawrence P.A."/>
        </authorList>
    </citation>
    <scope>FUNCTION</scope>
    <scope>TISSUE SPECIFICITY</scope>
</reference>
<reference key="12">
    <citation type="journal article" date="2002" name="J. Biol. Chem.">
        <title>Drosophila segment polarity gene product porcupine stimulates the posttranslational N-glycosylation of wingless in the endoplasmic reticulum.</title>
        <authorList>
            <person name="Tanaka K."/>
            <person name="Kitagawa Y."/>
            <person name="Kadowaki T."/>
        </authorList>
    </citation>
    <scope>SUBUNIT</scope>
    <scope>INTERACTION WITH PORCUPINE</scope>
    <scope>GLYCOSYLATION AT ASN-103 AND ASN-414</scope>
    <scope>MUTAGENESIS OF THR-51; SER-105; SER-110 AND THR-416</scope>
</reference>
<reference key="13">
    <citation type="journal article" date="2004" name="J. Biol. Chem.">
        <title>Drosophila wnt-1 undergoes a hydrophobic modification and is targeted to lipid rafts, a process that requires porcupine.</title>
        <authorList>
            <person name="Zhai L."/>
            <person name="Chaturvedi D."/>
            <person name="Cumberledge S."/>
        </authorList>
    </citation>
    <scope>PALMITOLEOYLATION BY PORCUPINE</scope>
    <scope>SUBCELLULAR LOCATION</scope>
</reference>
<reference key="14">
    <citation type="journal article" date="2005" name="Nature">
        <title>Lipoprotein particles are required for Hedgehog and Wingless signalling.</title>
        <authorList>
            <person name="Panakova D."/>
            <person name="Sprong H."/>
            <person name="Marois E."/>
            <person name="Thiele C."/>
            <person name="Eaton S."/>
        </authorList>
    </citation>
    <scope>ROLE OF LIPOPHORIN IN MOVEMENT</scope>
</reference>
<reference key="15">
    <citation type="journal article" date="2008" name="Nat. Cell Biol.">
        <title>Wingless secretion requires endosome-to-Golgi retrieval of Wntless/Evi/Sprinter by the retromer complex.</title>
        <authorList>
            <person name="Franch-Marro X."/>
            <person name="Wendler F."/>
            <person name="Guidato S."/>
            <person name="Griffith J."/>
            <person name="Baena-Lopez A."/>
            <person name="Itasaki N."/>
            <person name="Maurice M.M."/>
            <person name="Vincent J.P."/>
        </authorList>
    </citation>
    <scope>FUNCTION</scope>
    <scope>INTERACTION WITH WLS</scope>
    <scope>SUBCELLULAR LOCATION</scope>
</reference>
<reference key="16">
    <citation type="journal article" date="2008" name="Nat. Cell Biol.">
        <title>Wingless secretion promotes and requires retromer-dependent cycling of Wntless.</title>
        <authorList>
            <person name="Port F."/>
            <person name="Kuster M."/>
            <person name="Herr P."/>
            <person name="Furger E."/>
            <person name="Banziger C."/>
            <person name="Hausmann G."/>
            <person name="Basler K."/>
        </authorList>
    </citation>
    <scope>FUNCTION</scope>
    <scope>DISRUPTION PHENOTYPE</scope>
</reference>
<reference key="17">
    <citation type="journal article" date="2009" name="Cell">
        <title>Trans-synaptic transmission of vesicular Wnt signals through Evi/Wntless.</title>
        <authorList>
            <person name="Korkut C."/>
            <person name="Ataman B."/>
            <person name="Ramachandran P."/>
            <person name="Ashley J."/>
            <person name="Barria R."/>
            <person name="Gherbesi N."/>
            <person name="Budnik V."/>
        </authorList>
    </citation>
    <scope>FUNCTION</scope>
    <scope>SUBCELLULAR LOCATION</scope>
</reference>
<reference key="18">
    <citation type="journal article" date="2014" name="PLoS ONE">
        <title>Carrier of Wingless (Cow), a secreted heparan sulfate proteoglycan, promotes extracellular transport of Wingless.</title>
        <authorList>
            <person name="Chang Y.H."/>
            <person name="Sun Y.H."/>
        </authorList>
    </citation>
    <scope>INTERACTION WITH COW</scope>
</reference>
<reference key="19">
    <citation type="journal article" date="2015" name="Nature">
        <title>Notum deacylates Wnt proteins to suppress signalling activity.</title>
        <authorList>
            <person name="Kakugawa S."/>
            <person name="Langton P.F."/>
            <person name="Zebisch M."/>
            <person name="Howell S.A."/>
            <person name="Chang T.H."/>
            <person name="Liu Y."/>
            <person name="Feizi T."/>
            <person name="Bineva G."/>
            <person name="O'Reilly N."/>
            <person name="Snijders A.P."/>
            <person name="Jones E.Y."/>
            <person name="Vincent J.P."/>
        </authorList>
    </citation>
    <scope>DEPALMITOLEOYLATION</scope>
</reference>
<reference key="20">
    <citation type="journal article" date="2016" name="Nat. Cell Biol.">
        <title>Godzilla-dependent transcytosis promotes Wingless signalling in Drosophila wing imaginal discs.</title>
        <authorList>
            <person name="Yamazaki Y."/>
            <person name="Palmer L."/>
            <person name="Alexandre C."/>
            <person name="Kakugawa S."/>
            <person name="Beckett K."/>
            <person name="Gaugue I."/>
            <person name="Palmer R.H."/>
            <person name="Vincent J.P."/>
        </authorList>
    </citation>
    <scope>SUBCELLULAR LOCATION</scope>
</reference>
<reference key="21">
    <citation type="journal article" date="2021" name="Nat. Commun.">
        <title>Pegasus, a small extracellular peptide enhancing short-range diffusion of Wingless.</title>
        <authorList>
            <person name="Magny E.G."/>
            <person name="Platero A.I."/>
            <person name="Bishop S.A."/>
            <person name="Pueyo J.I."/>
            <person name="Aguilar-Hidalgo D."/>
            <person name="Couso J.P."/>
        </authorList>
    </citation>
    <scope>INTERACTION WITH PEG</scope>
</reference>
<keyword id="KW-0025">Alternative splicing</keyword>
<keyword id="KW-0217">Developmental protein</keyword>
<keyword id="KW-1015">Disulfide bond</keyword>
<keyword id="KW-0272">Extracellular matrix</keyword>
<keyword id="KW-0325">Glycoprotein</keyword>
<keyword id="KW-0449">Lipoprotein</keyword>
<keyword id="KW-0472">Membrane</keyword>
<keyword id="KW-0504">Morphogen</keyword>
<keyword id="KW-1185">Reference proteome</keyword>
<keyword id="KW-0964">Secreted</keyword>
<keyword id="KW-0709">Segmentation polarity protein</keyword>
<keyword id="KW-0732">Signal</keyword>
<keyword id="KW-0770">Synapse</keyword>
<keyword id="KW-0879">Wnt signaling pathway</keyword>
<proteinExistence type="evidence at protein level"/>
<protein>
    <recommendedName>
        <fullName>Protein wingless</fullName>
    </recommendedName>
    <alternativeName>
        <fullName>Protein Wnt-1</fullName>
    </alternativeName>
    <alternativeName>
        <fullName>Protein int-1</fullName>
    </alternativeName>
    <alternativeName>
        <fullName>dInt-1</fullName>
    </alternativeName>
    <alternativeName>
        <fullName>dWnt-1</fullName>
    </alternativeName>
</protein>
<name>WNTG_DROME</name>
<dbReference type="EMBL" id="M17230">
    <property type="protein sequence ID" value="AAA28647.1"/>
    <property type="molecule type" value="mRNA"/>
</dbReference>
<dbReference type="EMBL" id="J03650">
    <property type="protein sequence ID" value="AAA28646.1"/>
    <property type="molecule type" value="mRNA"/>
</dbReference>
<dbReference type="EMBL" id="S67382">
    <property type="protein sequence ID" value="AAB29368.1"/>
    <property type="molecule type" value="mRNA"/>
</dbReference>
<dbReference type="EMBL" id="S67383">
    <property type="protein sequence ID" value="AAB29369.1"/>
    <property type="molecule type" value="mRNA"/>
</dbReference>
<dbReference type="EMBL" id="AE014134">
    <property type="protein sequence ID" value="AAF52501.1"/>
    <property type="molecule type" value="Genomic_DNA"/>
</dbReference>
<dbReference type="EMBL" id="AE014134">
    <property type="protein sequence ID" value="AAN10628.1"/>
    <property type="molecule type" value="Genomic_DNA"/>
</dbReference>
<dbReference type="EMBL" id="AY128458">
    <property type="protein sequence ID" value="AAM75051.1"/>
    <property type="molecule type" value="mRNA"/>
</dbReference>
<dbReference type="PIR" id="A29650">
    <property type="entry name" value="A29650"/>
</dbReference>
<dbReference type="PIR" id="A31337">
    <property type="entry name" value="TVFFT1"/>
</dbReference>
<dbReference type="RefSeq" id="NP_523502.1">
    <molecule id="P09615-1"/>
    <property type="nucleotide sequence ID" value="NM_078778.5"/>
</dbReference>
<dbReference type="SMR" id="P09615"/>
<dbReference type="BioGRID" id="60155">
    <property type="interactions" value="130"/>
</dbReference>
<dbReference type="DIP" id="DIP-21777N"/>
<dbReference type="FunCoup" id="P09615">
    <property type="interactions" value="247"/>
</dbReference>
<dbReference type="IntAct" id="P09615">
    <property type="interactions" value="1"/>
</dbReference>
<dbReference type="MINT" id="P09615"/>
<dbReference type="STRING" id="7227.FBpp0079060"/>
<dbReference type="GlyCosmos" id="P09615">
    <property type="glycosylation" value="3 sites, No reported glycans"/>
</dbReference>
<dbReference type="GlyGen" id="P09615">
    <property type="glycosylation" value="3 sites"/>
</dbReference>
<dbReference type="iPTMnet" id="P09615"/>
<dbReference type="SwissPalm" id="P09615"/>
<dbReference type="PaxDb" id="7227-FBpp0079060"/>
<dbReference type="EnsemblMetazoa" id="FBtr0079432">
    <molecule id="P09615-1"/>
    <property type="protein sequence ID" value="FBpp0079060"/>
    <property type="gene ID" value="FBgn0284084"/>
</dbReference>
<dbReference type="GeneID" id="34009"/>
<dbReference type="KEGG" id="dme:Dmel_CG4889"/>
<dbReference type="AGR" id="FB:FBgn0284084"/>
<dbReference type="CTD" id="474168"/>
<dbReference type="FlyBase" id="FBgn0284084">
    <property type="gene designation" value="wg"/>
</dbReference>
<dbReference type="VEuPathDB" id="VectorBase:FBgn0284084"/>
<dbReference type="eggNOG" id="KOG3913">
    <property type="taxonomic scope" value="Eukaryota"/>
</dbReference>
<dbReference type="GeneTree" id="ENSGT00940000160329"/>
<dbReference type="HOGENOM" id="CLU_033039_1_1_1"/>
<dbReference type="InParanoid" id="P09615"/>
<dbReference type="OMA" id="NDHMPDI"/>
<dbReference type="OrthoDB" id="5945655at2759"/>
<dbReference type="PhylomeDB" id="P09615"/>
<dbReference type="Reactome" id="R-DME-201681">
    <property type="pathway name" value="TCF dependent signaling in response to WNT"/>
</dbReference>
<dbReference type="Reactome" id="R-DME-209387">
    <property type="pathway name" value="Phosphorylation of ARR"/>
</dbReference>
<dbReference type="Reactome" id="R-DME-209440">
    <property type="pathway name" value="Recruitment of the 'destruction complex' to the receptor complex, the degradation of AXN and release of ARM"/>
</dbReference>
<dbReference type="Reactome" id="R-DME-209472">
    <property type="pathway name" value="Assembly of receptor complex"/>
</dbReference>
<dbReference type="Reactome" id="R-DME-3238698">
    <property type="pathway name" value="WNT ligand biogenesis and trafficking"/>
</dbReference>
<dbReference type="Reactome" id="R-DME-4086400">
    <property type="pathway name" value="PCP/CE pathway"/>
</dbReference>
<dbReference type="Reactome" id="R-DME-4641262">
    <property type="pathway name" value="Disassembly of the destruction complex and recruitment of AXIN to the membrane"/>
</dbReference>
<dbReference type="SignaLink" id="P09615"/>
<dbReference type="GenomeRNAi" id="34009"/>
<dbReference type="PRO" id="PR:P09615"/>
<dbReference type="Proteomes" id="UP000000803">
    <property type="component" value="Chromosome 2L"/>
</dbReference>
<dbReference type="Bgee" id="FBgn0284084">
    <property type="expression patterns" value="Expressed in muscle cell in male reproductive gland and 78 other cell types or tissues"/>
</dbReference>
<dbReference type="ExpressionAtlas" id="P09615">
    <property type="expression patterns" value="baseline and differential"/>
</dbReference>
<dbReference type="GO" id="GO:0009986">
    <property type="term" value="C:cell surface"/>
    <property type="evidence" value="ECO:0000314"/>
    <property type="project" value="FlyBase"/>
</dbReference>
<dbReference type="GO" id="GO:0005783">
    <property type="term" value="C:endoplasmic reticulum"/>
    <property type="evidence" value="ECO:0000314"/>
    <property type="project" value="FlyBase"/>
</dbReference>
<dbReference type="GO" id="GO:0005576">
    <property type="term" value="C:extracellular region"/>
    <property type="evidence" value="ECO:0000314"/>
    <property type="project" value="FlyBase"/>
</dbReference>
<dbReference type="GO" id="GO:0005615">
    <property type="term" value="C:extracellular space"/>
    <property type="evidence" value="ECO:0000314"/>
    <property type="project" value="FlyBase"/>
</dbReference>
<dbReference type="GO" id="GO:0045121">
    <property type="term" value="C:membrane raft"/>
    <property type="evidence" value="ECO:0000314"/>
    <property type="project" value="FlyBase"/>
</dbReference>
<dbReference type="GO" id="GO:0005771">
    <property type="term" value="C:multivesicular body"/>
    <property type="evidence" value="ECO:0000314"/>
    <property type="project" value="FlyBase"/>
</dbReference>
<dbReference type="GO" id="GO:0005886">
    <property type="term" value="C:plasma membrane"/>
    <property type="evidence" value="ECO:0000314"/>
    <property type="project" value="FlyBase"/>
</dbReference>
<dbReference type="GO" id="GO:0043195">
    <property type="term" value="C:terminal bouton"/>
    <property type="evidence" value="ECO:0000314"/>
    <property type="project" value="FlyBase"/>
</dbReference>
<dbReference type="GO" id="GO:0005125">
    <property type="term" value="F:cytokine activity"/>
    <property type="evidence" value="ECO:0000318"/>
    <property type="project" value="GO_Central"/>
</dbReference>
<dbReference type="GO" id="GO:0050840">
    <property type="term" value="F:extracellular matrix binding"/>
    <property type="evidence" value="ECO:0000314"/>
    <property type="project" value="FlyBase"/>
</dbReference>
<dbReference type="GO" id="GO:0005109">
    <property type="term" value="F:frizzled binding"/>
    <property type="evidence" value="ECO:0000314"/>
    <property type="project" value="FlyBase"/>
</dbReference>
<dbReference type="GO" id="GO:0005539">
    <property type="term" value="F:glycosaminoglycan binding"/>
    <property type="evidence" value="ECO:0000314"/>
    <property type="project" value="FlyBase"/>
</dbReference>
<dbReference type="GO" id="GO:0043395">
    <property type="term" value="F:heparan sulfate proteoglycan binding"/>
    <property type="evidence" value="ECO:0000353"/>
    <property type="project" value="FlyBase"/>
</dbReference>
<dbReference type="GO" id="GO:0016015">
    <property type="term" value="F:morphogen activity"/>
    <property type="evidence" value="ECO:0000314"/>
    <property type="project" value="FlyBase"/>
</dbReference>
<dbReference type="GO" id="GO:0048018">
    <property type="term" value="F:receptor ligand activity"/>
    <property type="evidence" value="ECO:0000314"/>
    <property type="project" value="FlyBase"/>
</dbReference>
<dbReference type="GO" id="GO:0007448">
    <property type="term" value="P:anterior/posterior pattern specification, imaginal disc"/>
    <property type="evidence" value="ECO:0000315"/>
    <property type="project" value="FlyBase"/>
</dbReference>
<dbReference type="GO" id="GO:0035147">
    <property type="term" value="P:branch fusion, open tracheal system"/>
    <property type="evidence" value="ECO:0000315"/>
    <property type="project" value="FlyBase"/>
</dbReference>
<dbReference type="GO" id="GO:0048754">
    <property type="term" value="P:branching morphogenesis of an epithelial tube"/>
    <property type="evidence" value="ECO:0000315"/>
    <property type="project" value="FlyBase"/>
</dbReference>
<dbReference type="GO" id="GO:0060070">
    <property type="term" value="P:canonical Wnt signaling pathway"/>
    <property type="evidence" value="ECO:0000314"/>
    <property type="project" value="FlyBase"/>
</dbReference>
<dbReference type="GO" id="GO:0010002">
    <property type="term" value="P:cardioblast differentiation"/>
    <property type="evidence" value="ECO:0000315"/>
    <property type="project" value="FlyBase"/>
</dbReference>
<dbReference type="GO" id="GO:0090254">
    <property type="term" value="P:cell elongation involved in imaginal disc-derived wing morphogenesis"/>
    <property type="evidence" value="ECO:0000314"/>
    <property type="project" value="FlyBase"/>
</dbReference>
<dbReference type="GO" id="GO:0045165">
    <property type="term" value="P:cell fate commitment"/>
    <property type="evidence" value="ECO:0000318"/>
    <property type="project" value="GO_Central"/>
</dbReference>
<dbReference type="GO" id="GO:0035293">
    <property type="term" value="P:chitin-based larval cuticle pattern formation"/>
    <property type="evidence" value="ECO:0000315"/>
    <property type="project" value="FlyBase"/>
</dbReference>
<dbReference type="GO" id="GO:0001745">
    <property type="term" value="P:compound eye morphogenesis"/>
    <property type="evidence" value="ECO:0000315"/>
    <property type="project" value="FlyBase"/>
</dbReference>
<dbReference type="GO" id="GO:0035225">
    <property type="term" value="P:determination of genital disc primordium"/>
    <property type="evidence" value="ECO:0000315"/>
    <property type="project" value="FlyBase"/>
</dbReference>
<dbReference type="GO" id="GO:0048546">
    <property type="term" value="P:digestive tract morphogenesis"/>
    <property type="evidence" value="ECO:0000315"/>
    <property type="project" value="FlyBase"/>
</dbReference>
<dbReference type="GO" id="GO:0007391">
    <property type="term" value="P:dorsal closure"/>
    <property type="evidence" value="ECO:0000315"/>
    <property type="project" value="FlyBase"/>
</dbReference>
<dbReference type="GO" id="GO:0007450">
    <property type="term" value="P:dorsal/ventral pattern formation, imaginal disc"/>
    <property type="evidence" value="ECO:0000315"/>
    <property type="project" value="FlyBase"/>
</dbReference>
<dbReference type="GO" id="GO:0007398">
    <property type="term" value="P:ectoderm development"/>
    <property type="evidence" value="ECO:0000315"/>
    <property type="project" value="FlyBase"/>
</dbReference>
<dbReference type="GO" id="GO:0008544">
    <property type="term" value="P:epidermis development"/>
    <property type="evidence" value="ECO:0000315"/>
    <property type="project" value="FlyBase"/>
</dbReference>
<dbReference type="GO" id="GO:0061331">
    <property type="term" value="P:epithelial cell proliferation involved in Malpighian tubule morphogenesis"/>
    <property type="evidence" value="ECO:0000315"/>
    <property type="project" value="FlyBase"/>
</dbReference>
<dbReference type="GO" id="GO:0035153">
    <property type="term" value="P:epithelial cell type specification, open tracheal system"/>
    <property type="evidence" value="ECO:0000315"/>
    <property type="project" value="FlyBase"/>
</dbReference>
<dbReference type="GO" id="GO:0030707">
    <property type="term" value="P:follicle cell of egg chamber development"/>
    <property type="evidence" value="ECO:0000315"/>
    <property type="project" value="FlyBase"/>
</dbReference>
<dbReference type="GO" id="GO:0035224">
    <property type="term" value="P:genital disc anterior/posterior pattern formation"/>
    <property type="evidence" value="ECO:0000270"/>
    <property type="project" value="FlyBase"/>
</dbReference>
<dbReference type="GO" id="GO:0035263">
    <property type="term" value="P:genital disc sexually dimorphic development"/>
    <property type="evidence" value="ECO:0000315"/>
    <property type="project" value="FlyBase"/>
</dbReference>
<dbReference type="GO" id="GO:0007507">
    <property type="term" value="P:heart development"/>
    <property type="evidence" value="ECO:0000315"/>
    <property type="project" value="FlyBase"/>
</dbReference>
<dbReference type="GO" id="GO:0060914">
    <property type="term" value="P:heart formation"/>
    <property type="evidence" value="ECO:0000315"/>
    <property type="project" value="FlyBase"/>
</dbReference>
<dbReference type="GO" id="GO:0007442">
    <property type="term" value="P:hindgut morphogenesis"/>
    <property type="evidence" value="ECO:0000315"/>
    <property type="project" value="FlyBase"/>
</dbReference>
<dbReference type="GO" id="GO:0007488">
    <property type="term" value="P:histoblast morphogenesis"/>
    <property type="evidence" value="ECO:0000315"/>
    <property type="project" value="FlyBase"/>
</dbReference>
<dbReference type="GO" id="GO:0007444">
    <property type="term" value="P:imaginal disc development"/>
    <property type="evidence" value="ECO:0000315"/>
    <property type="project" value="FlyBase"/>
</dbReference>
<dbReference type="GO" id="GO:0008587">
    <property type="term" value="P:imaginal disc-derived wing margin morphogenesis"/>
    <property type="evidence" value="ECO:0000315"/>
    <property type="project" value="FlyBase"/>
</dbReference>
<dbReference type="GO" id="GO:0007476">
    <property type="term" value="P:imaginal disc-derived wing morphogenesis"/>
    <property type="evidence" value="ECO:0000315"/>
    <property type="project" value="FlyBase"/>
</dbReference>
<dbReference type="GO" id="GO:0035217">
    <property type="term" value="P:labial disc development"/>
    <property type="evidence" value="ECO:0000315"/>
    <property type="project" value="FlyBase"/>
</dbReference>
<dbReference type="GO" id="GO:0035167">
    <property type="term" value="P:larval lymph gland hemopoiesis"/>
    <property type="evidence" value="ECO:0000315"/>
    <property type="project" value="FlyBase"/>
</dbReference>
<dbReference type="GO" id="GO:0007523">
    <property type="term" value="P:larval visceral muscle development"/>
    <property type="evidence" value="ECO:0000315"/>
    <property type="project" value="FlyBase"/>
</dbReference>
<dbReference type="GO" id="GO:0007616">
    <property type="term" value="P:long-term memory"/>
    <property type="evidence" value="ECO:0000315"/>
    <property type="project" value="FlyBase"/>
</dbReference>
<dbReference type="GO" id="GO:0035170">
    <property type="term" value="P:lymph gland crystal cell differentiation"/>
    <property type="evidence" value="ECO:0000315"/>
    <property type="project" value="FlyBase"/>
</dbReference>
<dbReference type="GO" id="GO:0048542">
    <property type="term" value="P:lymph gland development"/>
    <property type="evidence" value="ECO:0000315"/>
    <property type="project" value="FlyBase"/>
</dbReference>
<dbReference type="GO" id="GO:0061332">
    <property type="term" value="P:Malpighian tubule bud morphogenesis"/>
    <property type="evidence" value="ECO:0000315"/>
    <property type="project" value="FlyBase"/>
</dbReference>
<dbReference type="GO" id="GO:0061382">
    <property type="term" value="P:Malpighian tubule tip cell differentiation"/>
    <property type="evidence" value="ECO:0000315"/>
    <property type="project" value="FlyBase"/>
</dbReference>
<dbReference type="GO" id="GO:0007498">
    <property type="term" value="P:mesoderm development"/>
    <property type="evidence" value="ECO:0000315"/>
    <property type="project" value="FlyBase"/>
</dbReference>
<dbReference type="GO" id="GO:0048332">
    <property type="term" value="P:mesoderm morphogenesis"/>
    <property type="evidence" value="ECO:0000315"/>
    <property type="project" value="FlyBase"/>
</dbReference>
<dbReference type="GO" id="GO:0009996">
    <property type="term" value="P:negative regulation of cell fate specification"/>
    <property type="evidence" value="ECO:0000315"/>
    <property type="project" value="FlyBase"/>
</dbReference>
<dbReference type="GO" id="GO:0032876">
    <property type="term" value="P:negative regulation of DNA endoreduplication"/>
    <property type="evidence" value="ECO:0000315"/>
    <property type="project" value="FlyBase"/>
</dbReference>
<dbReference type="GO" id="GO:0045611">
    <property type="term" value="P:negative regulation of hemocyte differentiation"/>
    <property type="evidence" value="ECO:0000315"/>
    <property type="project" value="FlyBase"/>
</dbReference>
<dbReference type="GO" id="GO:0014019">
    <property type="term" value="P:neuroblast development"/>
    <property type="evidence" value="ECO:0000315"/>
    <property type="project" value="FlyBase"/>
</dbReference>
<dbReference type="GO" id="GO:0030182">
    <property type="term" value="P:neuron differentiation"/>
    <property type="evidence" value="ECO:0000318"/>
    <property type="project" value="GO_Central"/>
</dbReference>
<dbReference type="GO" id="GO:0061320">
    <property type="term" value="P:pericardial nephrocyte differentiation"/>
    <property type="evidence" value="ECO:0000315"/>
    <property type="project" value="FlyBase"/>
</dbReference>
<dbReference type="GO" id="GO:0008284">
    <property type="term" value="P:positive regulation of cell population proliferation"/>
    <property type="evidence" value="ECO:0000315"/>
    <property type="project" value="FlyBase"/>
</dbReference>
<dbReference type="GO" id="GO:0046672">
    <property type="term" value="P:positive regulation of compound eye retinal cell programmed cell death"/>
    <property type="evidence" value="ECO:0000315"/>
    <property type="project" value="FlyBase"/>
</dbReference>
<dbReference type="GO" id="GO:0042691">
    <property type="term" value="P:positive regulation of crystal cell differentiation"/>
    <property type="evidence" value="ECO:0000315"/>
    <property type="project" value="FlyBase"/>
</dbReference>
<dbReference type="GO" id="GO:0045572">
    <property type="term" value="P:positive regulation of imaginal disc growth"/>
    <property type="evidence" value="ECO:0000315"/>
    <property type="project" value="FlyBase"/>
</dbReference>
<dbReference type="GO" id="GO:0043068">
    <property type="term" value="P:positive regulation of programmed cell death"/>
    <property type="evidence" value="ECO:0000315"/>
    <property type="project" value="FlyBase"/>
</dbReference>
<dbReference type="GO" id="GO:2000648">
    <property type="term" value="P:positive regulation of stem cell proliferation"/>
    <property type="evidence" value="ECO:0000315"/>
    <property type="project" value="FlyBase"/>
</dbReference>
<dbReference type="GO" id="GO:0061328">
    <property type="term" value="P:posterior Malpighian tubule development"/>
    <property type="evidence" value="ECO:0000315"/>
    <property type="project" value="FlyBase"/>
</dbReference>
<dbReference type="GO" id="GO:0048728">
    <property type="term" value="P:proboscis development"/>
    <property type="evidence" value="ECO:0000315"/>
    <property type="project" value="FlyBase"/>
</dbReference>
<dbReference type="GO" id="GO:0048076">
    <property type="term" value="P:regulation of compound eye pigmentation"/>
    <property type="evidence" value="ECO:0000315"/>
    <property type="project" value="FlyBase"/>
</dbReference>
<dbReference type="GO" id="GO:0072091">
    <property type="term" value="P:regulation of stem cell proliferation"/>
    <property type="evidence" value="ECO:0000315"/>
    <property type="project" value="FlyBase"/>
</dbReference>
<dbReference type="GO" id="GO:0007367">
    <property type="term" value="P:segment polarity determination"/>
    <property type="evidence" value="ECO:0000315"/>
    <property type="project" value="FlyBase"/>
</dbReference>
<dbReference type="GO" id="GO:0035277">
    <property type="term" value="P:spiracle morphogenesis, open tracheal system"/>
    <property type="evidence" value="ECO:0000315"/>
    <property type="project" value="FlyBase"/>
</dbReference>
<dbReference type="GO" id="GO:0050808">
    <property type="term" value="P:synapse organization"/>
    <property type="evidence" value="ECO:0000315"/>
    <property type="project" value="FlyBase"/>
</dbReference>
<dbReference type="GO" id="GO:0051124">
    <property type="term" value="P:synaptic assembly at neuromuscular junction"/>
    <property type="evidence" value="ECO:0000315"/>
    <property type="project" value="FlyBase"/>
</dbReference>
<dbReference type="GO" id="GO:0042246">
    <property type="term" value="P:tissue regeneration"/>
    <property type="evidence" value="ECO:0000315"/>
    <property type="project" value="FlyBase"/>
</dbReference>
<dbReference type="GO" id="GO:0007418">
    <property type="term" value="P:ventral midline development"/>
    <property type="evidence" value="ECO:0000315"/>
    <property type="project" value="FlyBase"/>
</dbReference>
<dbReference type="GO" id="GO:0035311">
    <property type="term" value="P:wing cell fate specification"/>
    <property type="evidence" value="ECO:0000315"/>
    <property type="project" value="FlyBase"/>
</dbReference>
<dbReference type="GO" id="GO:0035220">
    <property type="term" value="P:wing disc development"/>
    <property type="evidence" value="ECO:0000316"/>
    <property type="project" value="FlyBase"/>
</dbReference>
<dbReference type="CDD" id="cd19333">
    <property type="entry name" value="Wnt_Wnt1"/>
    <property type="match status" value="1"/>
</dbReference>
<dbReference type="FunFam" id="3.30.2460.20:FF:000001">
    <property type="entry name" value="Wnt homolog"/>
    <property type="match status" value="1"/>
</dbReference>
<dbReference type="Gene3D" id="3.30.2460.20">
    <property type="match status" value="1"/>
</dbReference>
<dbReference type="InterPro" id="IPR005817">
    <property type="entry name" value="Wnt"/>
</dbReference>
<dbReference type="InterPro" id="IPR043158">
    <property type="entry name" value="Wnt_C"/>
</dbReference>
<dbReference type="InterPro" id="IPR018161">
    <property type="entry name" value="Wnt_CS"/>
</dbReference>
<dbReference type="PANTHER" id="PTHR12027:SF91">
    <property type="entry name" value="PROTO-ONCOGENE WNT-1"/>
    <property type="match status" value="1"/>
</dbReference>
<dbReference type="PANTHER" id="PTHR12027">
    <property type="entry name" value="WNT RELATED"/>
    <property type="match status" value="1"/>
</dbReference>
<dbReference type="Pfam" id="PF00110">
    <property type="entry name" value="wnt"/>
    <property type="match status" value="2"/>
</dbReference>
<dbReference type="PRINTS" id="PR01349">
    <property type="entry name" value="WNTPROTEIN"/>
</dbReference>
<dbReference type="SMART" id="SM00097">
    <property type="entry name" value="WNT1"/>
    <property type="match status" value="1"/>
</dbReference>
<dbReference type="PROSITE" id="PS00246">
    <property type="entry name" value="WNT1"/>
    <property type="match status" value="1"/>
</dbReference>
<organism>
    <name type="scientific">Drosophila melanogaster</name>
    <name type="common">Fruit fly</name>
    <dbReference type="NCBI Taxonomy" id="7227"/>
    <lineage>
        <taxon>Eukaryota</taxon>
        <taxon>Metazoa</taxon>
        <taxon>Ecdysozoa</taxon>
        <taxon>Arthropoda</taxon>
        <taxon>Hexapoda</taxon>
        <taxon>Insecta</taxon>
        <taxon>Pterygota</taxon>
        <taxon>Neoptera</taxon>
        <taxon>Endopterygota</taxon>
        <taxon>Diptera</taxon>
        <taxon>Brachycera</taxon>
        <taxon>Muscomorpha</taxon>
        <taxon>Ephydroidea</taxon>
        <taxon>Drosophilidae</taxon>
        <taxon>Drosophila</taxon>
        <taxon>Sophophora</taxon>
    </lineage>
</organism>
<gene>
    <name type="primary">wg</name>
    <name type="ORF">CG4889</name>
</gene>
<comment type="function">
    <text evidence="5 9 10 11">Binds as a ligand to a family of frizzled seven-transmembrane receptors and acts through a cascade of genes on the nucleus. Segment polarity protein. May be a growth factor. Acts on neighboring cells to regulate at least one gene, the homeobox segmentation gene engrailed. Wg signal represses arm phosphorylation. Wg signaling operates by inactivating the sgg repression of engrailed autoactivation. Wg and Wnt2 have a role in the developing trachea and together are responsible for all dorsal trunk formation. Wg also acts in the developing epidermis. Acts as a morphogen, and diffuses long distances despite its lipidation. Lipophorin is required for diffusion, probably by acting as vehicle for its movement, explaining how it can spread over long distances despite its lipidation. In non-neuronal cells, wls directs wg secretion via clathrin-mediated endocytosis and the retromer complex (a conserved protein complex consisting of Vps26 and Vps35) to sustain a wls traffic loop encompassing the Golgi, the cell surface, an endocytic compartment and a retrograde route leading back to the Golgi. In neuronal cells (the larval motorneuron NMJ), wg signal moves across the synapse through the release of wls-containing exosome-like vesicles.</text>
</comment>
<comment type="subunit">
    <text evidence="6 7 10 12 16">Monomer; folds by intramolecular disulfide bonds (PubMed:11821428). Interacts with porcupine (por) (PubMed:11821428). Interacts with wls; in the Golgi (PubMed:18193037). Interacts with en (PubMed:1335365). Interacts with the proteoglycan Cow (heparan sulfate-bound form); this stabilizes wg and promotes its extracellular distribution (PubMed:25360738). Interacts with peg; the interaction facilitates short-range diffusion of wg (PubMed:34580289).</text>
</comment>
<comment type="interaction">
    <interactant intactId="EBI-98242">
        <id>P09615</id>
    </interactant>
    <interactant intactId="EBI-7560899">
        <id>Q9VXY9</id>
        <label>opm</label>
    </interactant>
    <organismsDiffer>false</organismsDiffer>
    <experiments>2</experiments>
</comment>
<comment type="subcellular location">
    <subcellularLocation>
        <location evidence="8 10 13 18">Secreted</location>
    </subcellularLocation>
    <subcellularLocation>
        <location evidence="11">Synapse</location>
    </subcellularLocation>
    <subcellularLocation>
        <location>Membrane</location>
        <topology>Lipid-anchor</topology>
    </subcellularLocation>
    <subcellularLocation>
        <location evidence="8">Secreted</location>
        <location evidence="8">Extracellular space</location>
        <location evidence="8">Extracellular matrix</location>
    </subcellularLocation>
    <text evidence="8 13">Palmitoleoylation converts wg into a membrane-anchored protein that is partitioned into specialized lipid raft microdomains before secretion (PubMed:15166250). In the wing imaginal disk epithelium, the protein is produced in the apical region of the cell and undergoes transcytosis to the basolateral surface to be released in the extracellular space (PubMed:26974662). Possibly associated with the extracellular matrix (PubMed:15166250).</text>
</comment>
<comment type="alternative products">
    <event type="alternative splicing"/>
    <isoform>
        <id>P09615-1</id>
        <name>A</name>
        <sequence type="displayed"/>
    </isoform>
    <isoform>
        <id>P09615-2</id>
        <name>B</name>
        <sequence type="described" ref="VSP_016535"/>
    </isoform>
</comment>
<comment type="tissue specificity">
    <text evidence="5 14">Segmented expression in embryos. In embryonic tracheal cells, expression is in stripes flanking the tracheal placode.</text>
</comment>
<comment type="developmental stage">
    <text evidence="14 15">Expressed throughout development, but barely detectable in adults.</text>
</comment>
<comment type="PTM">
    <text evidence="20 21 22">Palmitoleoylated by porcupine. The lipid group functions as a sorting signal, targeting the ligand to polarized vesicles that transport wg to unique sites at the cell surface. Depalmitoleoylated by notum, leading to inhibit Wnt signaling pathway.</text>
</comment>
<comment type="PTM">
    <text evidence="6">Major form is glycosylated at 2 sites, glycosylation is stimulated by porcupine at the ER.</text>
</comment>
<comment type="disruption phenotype">
    <text evidence="9">Accumulation in the Golgi, thereby preventing secretion.</text>
</comment>
<comment type="similarity">
    <text evidence="19">Belongs to the Wnt family.</text>
</comment>
<comment type="caution">
    <text evidence="19">Was initially thought to be palmitoylated at Ser-239. It was later shown that it is palmitoleoylated.</text>
</comment>
<evidence type="ECO:0000250" key="1">
    <source>
        <dbReference type="UniProtKB" id="P28026"/>
    </source>
</evidence>
<evidence type="ECO:0000250" key="2">
    <source>
        <dbReference type="UniProtKB" id="P56704"/>
    </source>
</evidence>
<evidence type="ECO:0000255" key="3"/>
<evidence type="ECO:0000256" key="4">
    <source>
        <dbReference type="SAM" id="MobiDB-lite"/>
    </source>
</evidence>
<evidence type="ECO:0000269" key="5">
    <source>
    </source>
</evidence>
<evidence type="ECO:0000269" key="6">
    <source>
    </source>
</evidence>
<evidence type="ECO:0000269" key="7">
    <source>
    </source>
</evidence>
<evidence type="ECO:0000269" key="8">
    <source>
    </source>
</evidence>
<evidence type="ECO:0000269" key="9">
    <source>
    </source>
</evidence>
<evidence type="ECO:0000269" key="10">
    <source>
    </source>
</evidence>
<evidence type="ECO:0000269" key="11">
    <source>
    </source>
</evidence>
<evidence type="ECO:0000269" key="12">
    <source>
    </source>
</evidence>
<evidence type="ECO:0000269" key="13">
    <source>
    </source>
</evidence>
<evidence type="ECO:0000269" key="14">
    <source>
    </source>
</evidence>
<evidence type="ECO:0000269" key="15">
    <source>
    </source>
</evidence>
<evidence type="ECO:0000269" key="16">
    <source>
    </source>
</evidence>
<evidence type="ECO:0000269" key="17">
    <source>
    </source>
</evidence>
<evidence type="ECO:0000269" key="18">
    <source>
    </source>
</evidence>
<evidence type="ECO:0000305" key="19"/>
<evidence type="ECO:0000305" key="20">
    <source>
    </source>
</evidence>
<evidence type="ECO:0000305" key="21">
    <source>
    </source>
</evidence>
<evidence type="ECO:0000305" key="22">
    <source>
    </source>
</evidence>